<accession>P56471</accession>
<name>IDH3A_PIG</name>
<comment type="function">
    <text evidence="3">Catalytic subunit of the enzyme which catalyzes the decarboxylation of isocitrate (ICT) into alpha-ketoglutarate. The heterodimer composed of the alpha (IDH3A) and beta (IDH3B) subunits and the heterodimer composed of the alpha (IDH3A) and gamma (IDH3G) subunits, have considerable basal activity but the full activity of the heterotetramer (containing two subunits of IDH3A, one of IDH3B and one of IDH3G) requires the assembly and cooperative function of both heterodimers.</text>
</comment>
<comment type="catalytic activity">
    <reaction evidence="3">
        <text>D-threo-isocitrate + NAD(+) = 2-oxoglutarate + CO2 + NADH</text>
        <dbReference type="Rhea" id="RHEA:23632"/>
        <dbReference type="ChEBI" id="CHEBI:15562"/>
        <dbReference type="ChEBI" id="CHEBI:16526"/>
        <dbReference type="ChEBI" id="CHEBI:16810"/>
        <dbReference type="ChEBI" id="CHEBI:57540"/>
        <dbReference type="ChEBI" id="CHEBI:57945"/>
        <dbReference type="EC" id="1.1.1.41"/>
    </reaction>
    <physiologicalReaction direction="left-to-right" evidence="3">
        <dbReference type="Rhea" id="RHEA:23633"/>
    </physiologicalReaction>
</comment>
<comment type="cofactor">
    <cofactor evidence="1">
        <name>Mg(2+)</name>
        <dbReference type="ChEBI" id="CHEBI:18420"/>
    </cofactor>
    <cofactor evidence="1">
        <name>Mn(2+)</name>
        <dbReference type="ChEBI" id="CHEBI:29035"/>
    </cofactor>
    <text evidence="1">Divalent metal cations; Mn(2+) or Mg(2+). Activity higher in presence of Mn(2+) than of Mg(2+). Binds 1 Mg(2+) or Mn(2+) ion per subunit.</text>
</comment>
<comment type="activity regulation">
    <text evidence="1">The heterotetramer and the heterodimer composed of IDH3A and IDH3G subunits can be allosterically activated by citrate (CIT) or/and ADP, and the two activators can act independently or synergistically. The heterodimer composed of IDH3A and IDH3B subunits cannot be allosterically regulated and the allosteric regulation of the heterotetramer is through the IDH3G subunit and not the IDH3B subunit. The IDH3G subunit contains the allosteric site which consists of a CIT-binding site and an ADP-binding site, and the binding of CIT and ADP causes conformational changes at the allosteric site which are transmitted to the active site in the catalytic subunit (IDH3A) through a cascade of conformational changes at the heterodimer interface, leading to stabilization of the isocitrate-binding at the active site and thus activation of the enzyme. ATP can activate the heterotetramer and the heterodimer composed of IDH3A and IDH3G subunits at low concentrations but inhibits their activities at high concentrations, whereas ATP exhibits only inhibitory effect on the heterodimer composed of IDH3A and IDH3B subunits.</text>
</comment>
<comment type="subunit">
    <text evidence="1">Heterooligomer of subunits alpha (IDH3A), beta (IDH3B), and gamma (IDH3G) in the apparent ratio of 2:1:1. The heterodimer containing one IDH3A and one IDH3B subunit and the heterodimer containing one IDH3A and one IDH3G subunit assemble into a heterotetramer (which contains two subunits of IDH3A, one of IDH3B and one of IDH3G) and further into the heterooctamer.</text>
</comment>
<comment type="subcellular location">
    <subcellularLocation>
        <location evidence="3">Mitochondrion</location>
    </subcellularLocation>
</comment>
<comment type="similarity">
    <text evidence="4">Belongs to the isocitrate and isopropylmalate dehydrogenases family.</text>
</comment>
<sequence length="366" mass="39632">MAGPAWISKVSRLLGAFHNQKQVTRGFAGGVKTVTLIPGDGIGPEISAAVMKIFDAAKAPIQWEERNVTAIQGPGGKWMIPPEAKESMDKNKMGLKGPLKTPIAAGHPSMNLLLRKTFDLYANVRPCVSIEGYKTPYTDVNIVTIRENTEGEYSGIEHVIVDGVVQSIKLITEGASKRIAEFAFEYARNNHRSNVTAVHKANIMRMSDGLFLQKCREVAENCKDIKFNEMYLDTVCLNMVQDPSQFDVLVMPNLYGDILSDLCAGLIGGLGVTPSGNIGANGVAIFESVHGTAPDIAGKDMANPTALLLSAVMMLRHMGLFDHAAKIETACFATIKDGKSLTKDLGGNAKCSDFTEEICRRVKDLD</sequence>
<evidence type="ECO:0000250" key="1">
    <source>
        <dbReference type="UniProtKB" id="P50213"/>
    </source>
</evidence>
<evidence type="ECO:0000250" key="2">
    <source>
        <dbReference type="UniProtKB" id="Q9D6R2"/>
    </source>
</evidence>
<evidence type="ECO:0000269" key="3">
    <source>
    </source>
</evidence>
<evidence type="ECO:0000305" key="4"/>
<evidence type="ECO:0000305" key="5">
    <source>
    </source>
</evidence>
<proteinExistence type="evidence at protein level"/>
<organism>
    <name type="scientific">Sus scrofa</name>
    <name type="common">Pig</name>
    <dbReference type="NCBI Taxonomy" id="9823"/>
    <lineage>
        <taxon>Eukaryota</taxon>
        <taxon>Metazoa</taxon>
        <taxon>Chordata</taxon>
        <taxon>Craniata</taxon>
        <taxon>Vertebrata</taxon>
        <taxon>Euteleostomi</taxon>
        <taxon>Mammalia</taxon>
        <taxon>Eutheria</taxon>
        <taxon>Laurasiatheria</taxon>
        <taxon>Artiodactyla</taxon>
        <taxon>Suina</taxon>
        <taxon>Suidae</taxon>
        <taxon>Sus</taxon>
    </lineage>
</organism>
<feature type="transit peptide" description="Mitochondrion" evidence="1">
    <location>
        <begin position="1"/>
        <end position="27"/>
    </location>
</feature>
<feature type="chain" id="PRO_0000083590" description="Isocitrate dehydrogenase [NAD] subunit alpha, mitochondrial">
    <location>
        <begin position="28"/>
        <end position="366"/>
    </location>
</feature>
<feature type="binding site" evidence="1">
    <location>
        <position position="115"/>
    </location>
    <ligand>
        <name>substrate</name>
    </ligand>
</feature>
<feature type="binding site" evidence="1">
    <location>
        <position position="125"/>
    </location>
    <ligand>
        <name>substrate</name>
    </ligand>
</feature>
<feature type="binding site" evidence="1">
    <location>
        <position position="146"/>
    </location>
    <ligand>
        <name>substrate</name>
    </ligand>
</feature>
<feature type="binding site" evidence="1">
    <location>
        <position position="233"/>
    </location>
    <ligand>
        <name>Mg(2+)</name>
        <dbReference type="ChEBI" id="CHEBI:18420"/>
    </ligand>
</feature>
<feature type="binding site" evidence="1">
    <location>
        <position position="257"/>
    </location>
    <ligand>
        <name>Mg(2+)</name>
        <dbReference type="ChEBI" id="CHEBI:18420"/>
    </ligand>
</feature>
<feature type="binding site" evidence="1">
    <location>
        <position position="261"/>
    </location>
    <ligand>
        <name>Mg(2+)</name>
        <dbReference type="ChEBI" id="CHEBI:18420"/>
    </ligand>
</feature>
<feature type="site" description="Critical for catalysis" evidence="1">
    <location>
        <position position="153"/>
    </location>
</feature>
<feature type="site" description="Critical for catalysis" evidence="1">
    <location>
        <position position="200"/>
    </location>
</feature>
<feature type="modified residue" description="N6-succinyllysine" evidence="2">
    <location>
        <position position="77"/>
    </location>
</feature>
<feature type="modified residue" description="Phosphothreonine" evidence="2">
    <location>
        <position position="101"/>
    </location>
</feature>
<feature type="modified residue" description="N6-acetyllysine" evidence="2">
    <location>
        <position position="223"/>
    </location>
</feature>
<feature type="modified residue" description="N6-acetyllysine; alternate" evidence="1">
    <location>
        <position position="343"/>
    </location>
</feature>
<feature type="modified residue" description="N6-succinyllysine; alternate" evidence="2">
    <location>
        <position position="343"/>
    </location>
</feature>
<feature type="modified residue" description="N6-succinyllysine" evidence="2">
    <location>
        <position position="350"/>
    </location>
</feature>
<dbReference type="EC" id="1.1.1.41" evidence="3"/>
<dbReference type="RefSeq" id="XP_001927373.3">
    <property type="nucleotide sequence ID" value="XM_001927338.4"/>
</dbReference>
<dbReference type="SMR" id="P56471"/>
<dbReference type="STRING" id="9823.ENSSSCP00000034039"/>
<dbReference type="GlyGen" id="P56471">
    <property type="glycosylation" value="1 site"/>
</dbReference>
<dbReference type="PeptideAtlas" id="P56471"/>
<dbReference type="Ensembl" id="ENSSSCT00025081323.1">
    <property type="protein sequence ID" value="ENSSSCP00025035338.1"/>
    <property type="gene ID" value="ENSSSCG00025058757.1"/>
</dbReference>
<dbReference type="Ensembl" id="ENSSSCT00035052046.1">
    <property type="protein sequence ID" value="ENSSSCP00035020917.1"/>
    <property type="gene ID" value="ENSSSCG00035039154.1"/>
</dbReference>
<dbReference type="Ensembl" id="ENSSSCT00055056814.1">
    <property type="protein sequence ID" value="ENSSSCP00055045439.1"/>
    <property type="gene ID" value="ENSSSCG00055028623.1"/>
</dbReference>
<dbReference type="Ensembl" id="ENSSSCT00065028793.1">
    <property type="protein sequence ID" value="ENSSSCP00065011778.1"/>
    <property type="gene ID" value="ENSSSCG00065021623.1"/>
</dbReference>
<dbReference type="GeneID" id="100157242"/>
<dbReference type="KEGG" id="ssc:100157242"/>
<dbReference type="CTD" id="3419"/>
<dbReference type="InParanoid" id="P56471"/>
<dbReference type="OrthoDB" id="10261637at2759"/>
<dbReference type="SABIO-RK" id="P56471"/>
<dbReference type="Proteomes" id="UP000008227">
    <property type="component" value="Unplaced"/>
</dbReference>
<dbReference type="Proteomes" id="UP000314985">
    <property type="component" value="Unplaced"/>
</dbReference>
<dbReference type="Proteomes" id="UP000694570">
    <property type="component" value="Unplaced"/>
</dbReference>
<dbReference type="Proteomes" id="UP000694571">
    <property type="component" value="Unplaced"/>
</dbReference>
<dbReference type="Proteomes" id="UP000694720">
    <property type="component" value="Unplaced"/>
</dbReference>
<dbReference type="Proteomes" id="UP000694722">
    <property type="component" value="Unplaced"/>
</dbReference>
<dbReference type="Proteomes" id="UP000694723">
    <property type="component" value="Unplaced"/>
</dbReference>
<dbReference type="Proteomes" id="UP000694724">
    <property type="component" value="Unplaced"/>
</dbReference>
<dbReference type="Proteomes" id="UP000694725">
    <property type="component" value="Unplaced"/>
</dbReference>
<dbReference type="Proteomes" id="UP000694726">
    <property type="component" value="Unplaced"/>
</dbReference>
<dbReference type="Proteomes" id="UP000694727">
    <property type="component" value="Unplaced"/>
</dbReference>
<dbReference type="Proteomes" id="UP000694728">
    <property type="component" value="Unplaced"/>
</dbReference>
<dbReference type="GO" id="GO:0005739">
    <property type="term" value="C:mitochondrion"/>
    <property type="evidence" value="ECO:0000314"/>
    <property type="project" value="UniProtKB"/>
</dbReference>
<dbReference type="GO" id="GO:0004449">
    <property type="term" value="F:isocitrate dehydrogenase (NAD+) activity"/>
    <property type="evidence" value="ECO:0000314"/>
    <property type="project" value="UniProtKB"/>
</dbReference>
<dbReference type="GO" id="GO:0000287">
    <property type="term" value="F:magnesium ion binding"/>
    <property type="evidence" value="ECO:0000250"/>
    <property type="project" value="UniProtKB"/>
</dbReference>
<dbReference type="GO" id="GO:0051287">
    <property type="term" value="F:NAD binding"/>
    <property type="evidence" value="ECO:0007669"/>
    <property type="project" value="InterPro"/>
</dbReference>
<dbReference type="GO" id="GO:0006102">
    <property type="term" value="P:isocitrate metabolic process"/>
    <property type="evidence" value="ECO:0000318"/>
    <property type="project" value="GO_Central"/>
</dbReference>
<dbReference type="GO" id="GO:0006099">
    <property type="term" value="P:tricarboxylic acid cycle"/>
    <property type="evidence" value="ECO:0000314"/>
    <property type="project" value="UniProtKB"/>
</dbReference>
<dbReference type="FunFam" id="3.40.718.10:FF:000003">
    <property type="entry name" value="Isocitrate dehydrogenase [NAD] subunit, mitochondrial"/>
    <property type="match status" value="1"/>
</dbReference>
<dbReference type="Gene3D" id="3.40.718.10">
    <property type="entry name" value="Isopropylmalate Dehydrogenase"/>
    <property type="match status" value="1"/>
</dbReference>
<dbReference type="InterPro" id="IPR019818">
    <property type="entry name" value="IsoCit/isopropylmalate_DH_CS"/>
</dbReference>
<dbReference type="InterPro" id="IPR004434">
    <property type="entry name" value="Isocitrate_DH_NAD"/>
</dbReference>
<dbReference type="InterPro" id="IPR024084">
    <property type="entry name" value="IsoPropMal-DH-like_dom"/>
</dbReference>
<dbReference type="NCBIfam" id="TIGR00175">
    <property type="entry name" value="mito_nad_idh"/>
    <property type="match status" value="1"/>
</dbReference>
<dbReference type="PANTHER" id="PTHR11835">
    <property type="entry name" value="DECARBOXYLATING DEHYDROGENASES-ISOCITRATE, ISOPROPYLMALATE, TARTRATE"/>
    <property type="match status" value="1"/>
</dbReference>
<dbReference type="PANTHER" id="PTHR11835:SF34">
    <property type="entry name" value="ISOCITRATE DEHYDROGENASE [NAD] SUBUNIT ALPHA, MITOCHONDRIAL"/>
    <property type="match status" value="1"/>
</dbReference>
<dbReference type="Pfam" id="PF00180">
    <property type="entry name" value="Iso_dh"/>
    <property type="match status" value="1"/>
</dbReference>
<dbReference type="SMART" id="SM01329">
    <property type="entry name" value="Iso_dh"/>
    <property type="match status" value="1"/>
</dbReference>
<dbReference type="SUPFAM" id="SSF53659">
    <property type="entry name" value="Isocitrate/Isopropylmalate dehydrogenase-like"/>
    <property type="match status" value="1"/>
</dbReference>
<dbReference type="PROSITE" id="PS00470">
    <property type="entry name" value="IDH_IMDH"/>
    <property type="match status" value="1"/>
</dbReference>
<reference key="1">
    <citation type="journal article" date="1990" name="Biochemistry">
        <title>Subunit location and sequences of the cysteinyl peptides of pig heart NAD-dependent isocitrate dehydrogenase.</title>
        <authorList>
            <person name="Huang Y.C."/>
            <person name="Colman R.F."/>
        </authorList>
    </citation>
    <scope>PARTIAL PROTEIN SEQUENCE</scope>
    <scope>FUNCTION</scope>
    <scope>CATALYTIC ACTIVITY</scope>
    <scope>SUBCELLULAR LOCATION</scope>
    <source>
        <tissue>Heart</tissue>
    </source>
</reference>
<keyword id="KW-0007">Acetylation</keyword>
<keyword id="KW-0903">Direct protein sequencing</keyword>
<keyword id="KW-0460">Magnesium</keyword>
<keyword id="KW-0479">Metal-binding</keyword>
<keyword id="KW-0496">Mitochondrion</keyword>
<keyword id="KW-0520">NAD</keyword>
<keyword id="KW-0560">Oxidoreductase</keyword>
<keyword id="KW-0597">Phosphoprotein</keyword>
<keyword id="KW-1185">Reference proteome</keyword>
<keyword id="KW-0809">Transit peptide</keyword>
<keyword id="KW-0816">Tricarboxylic acid cycle</keyword>
<protein>
    <recommendedName>
        <fullName evidence="5">Isocitrate dehydrogenase [NAD] subunit alpha, mitochondrial</fullName>
        <ecNumber evidence="3">1.1.1.41</ecNumber>
    </recommendedName>
    <alternativeName>
        <fullName>Isocitric dehydrogenase subunit alpha</fullName>
    </alternativeName>
    <alternativeName>
        <fullName>NAD(+)-specific ICDH subunit alpha</fullName>
    </alternativeName>
</protein>
<gene>
    <name type="primary">IDH3A</name>
</gene>